<reference key="1">
    <citation type="journal article" date="2005" name="Genome Res.">
        <title>Coping with cold: the genome of the versatile marine Antarctica bacterium Pseudoalteromonas haloplanktis TAC125.</title>
        <authorList>
            <person name="Medigue C."/>
            <person name="Krin E."/>
            <person name="Pascal G."/>
            <person name="Barbe V."/>
            <person name="Bernsel A."/>
            <person name="Bertin P.N."/>
            <person name="Cheung F."/>
            <person name="Cruveiller S."/>
            <person name="D'Amico S."/>
            <person name="Duilio A."/>
            <person name="Fang G."/>
            <person name="Feller G."/>
            <person name="Ho C."/>
            <person name="Mangenot S."/>
            <person name="Marino G."/>
            <person name="Nilsson J."/>
            <person name="Parrilli E."/>
            <person name="Rocha E.P.C."/>
            <person name="Rouy Z."/>
            <person name="Sekowska A."/>
            <person name="Tutino M.L."/>
            <person name="Vallenet D."/>
            <person name="von Heijne G."/>
            <person name="Danchin A."/>
        </authorList>
    </citation>
    <scope>NUCLEOTIDE SEQUENCE [LARGE SCALE GENOMIC DNA]</scope>
    <source>
        <strain>TAC 125</strain>
    </source>
</reference>
<organism>
    <name type="scientific">Pseudoalteromonas translucida (strain TAC 125)</name>
    <dbReference type="NCBI Taxonomy" id="326442"/>
    <lineage>
        <taxon>Bacteria</taxon>
        <taxon>Pseudomonadati</taxon>
        <taxon>Pseudomonadota</taxon>
        <taxon>Gammaproteobacteria</taxon>
        <taxon>Alteromonadales</taxon>
        <taxon>Pseudoalteromonadaceae</taxon>
        <taxon>Pseudoalteromonas</taxon>
    </lineage>
</organism>
<protein>
    <recommendedName>
        <fullName evidence="1">S-adenosylmethionine synthase</fullName>
        <shortName evidence="1">AdoMet synthase</shortName>
        <ecNumber evidence="1">2.5.1.6</ecNumber>
    </recommendedName>
    <alternativeName>
        <fullName evidence="1">MAT</fullName>
    </alternativeName>
    <alternativeName>
        <fullName evidence="1">Methionine adenosyltransferase</fullName>
    </alternativeName>
</protein>
<comment type="function">
    <text evidence="1">Catalyzes the formation of S-adenosylmethionine (AdoMet) from methionine and ATP. The overall synthetic reaction is composed of two sequential steps, AdoMet formation and the subsequent tripolyphosphate hydrolysis which occurs prior to release of AdoMet from the enzyme.</text>
</comment>
<comment type="catalytic activity">
    <reaction evidence="1">
        <text>L-methionine + ATP + H2O = S-adenosyl-L-methionine + phosphate + diphosphate</text>
        <dbReference type="Rhea" id="RHEA:21080"/>
        <dbReference type="ChEBI" id="CHEBI:15377"/>
        <dbReference type="ChEBI" id="CHEBI:30616"/>
        <dbReference type="ChEBI" id="CHEBI:33019"/>
        <dbReference type="ChEBI" id="CHEBI:43474"/>
        <dbReference type="ChEBI" id="CHEBI:57844"/>
        <dbReference type="ChEBI" id="CHEBI:59789"/>
        <dbReference type="EC" id="2.5.1.6"/>
    </reaction>
</comment>
<comment type="cofactor">
    <cofactor evidence="1">
        <name>Mg(2+)</name>
        <dbReference type="ChEBI" id="CHEBI:18420"/>
    </cofactor>
    <text evidence="1">Binds 2 divalent ions per subunit.</text>
</comment>
<comment type="cofactor">
    <cofactor evidence="1">
        <name>K(+)</name>
        <dbReference type="ChEBI" id="CHEBI:29103"/>
    </cofactor>
    <text evidence="1">Binds 1 potassium ion per subunit.</text>
</comment>
<comment type="pathway">
    <text evidence="1">Amino-acid biosynthesis; S-adenosyl-L-methionine biosynthesis; S-adenosyl-L-methionine from L-methionine: step 1/1.</text>
</comment>
<comment type="subunit">
    <text evidence="1">Homotetramer; dimer of dimers.</text>
</comment>
<comment type="subcellular location">
    <subcellularLocation>
        <location evidence="1">Cytoplasm</location>
    </subcellularLocation>
</comment>
<comment type="similarity">
    <text evidence="1">Belongs to the AdoMet synthase family.</text>
</comment>
<proteinExistence type="inferred from homology"/>
<name>METK_PSET1</name>
<gene>
    <name evidence="1" type="primary">metK</name>
    <name type="ordered locus">PSHAa0670</name>
</gene>
<sequence length="383" mass="41697">MAKHLFTSESVSEGHPDKIADQISDAVLDAILEQDSHARVACETYVKTGMVMVGGEITTSAWVDIEEITRKTIRDIGYTNSDMGFDADSCAILNTIGKQSPDINQGVDRTSPEEQGAGDQGLMFGYACNETEVLMPAPITYSHRLVQRQAQVRKSGELNWLRPDAKSQVTFAYENGKPVGIDAVVLSTQHSEDISQKDLIEAVMETIIKPVLPAELITSATKFFINPTGRFVIGGPMGDCGLTGRKIIVDTYGGMARHGGGAFSGKDPSKVDRSAAYAARYVAKNIVAAGLADKCELQVSYAIGIAEPTSISVETFGTSKLEESRLIELIREHFDLRPYGLIKMLDLERPIYLPTAAYGHFGREEFPWERTDKAEALRAAAGL</sequence>
<accession>Q3IDQ1</accession>
<dbReference type="EC" id="2.5.1.6" evidence="1"/>
<dbReference type="EMBL" id="CR954246">
    <property type="protein sequence ID" value="CAI85754.1"/>
    <property type="molecule type" value="Genomic_DNA"/>
</dbReference>
<dbReference type="SMR" id="Q3IDQ1"/>
<dbReference type="STRING" id="326442.PSHAa0670"/>
<dbReference type="KEGG" id="pha:PSHAa0670"/>
<dbReference type="eggNOG" id="COG0192">
    <property type="taxonomic scope" value="Bacteria"/>
</dbReference>
<dbReference type="HOGENOM" id="CLU_041802_1_1_6"/>
<dbReference type="BioCyc" id="PHAL326442:PSHA_RS03275-MONOMER"/>
<dbReference type="UniPathway" id="UPA00315">
    <property type="reaction ID" value="UER00080"/>
</dbReference>
<dbReference type="Proteomes" id="UP000006843">
    <property type="component" value="Chromosome I"/>
</dbReference>
<dbReference type="GO" id="GO:0005737">
    <property type="term" value="C:cytoplasm"/>
    <property type="evidence" value="ECO:0007669"/>
    <property type="project" value="UniProtKB-SubCell"/>
</dbReference>
<dbReference type="GO" id="GO:0005524">
    <property type="term" value="F:ATP binding"/>
    <property type="evidence" value="ECO:0007669"/>
    <property type="project" value="UniProtKB-UniRule"/>
</dbReference>
<dbReference type="GO" id="GO:0000287">
    <property type="term" value="F:magnesium ion binding"/>
    <property type="evidence" value="ECO:0007669"/>
    <property type="project" value="UniProtKB-UniRule"/>
</dbReference>
<dbReference type="GO" id="GO:0004478">
    <property type="term" value="F:methionine adenosyltransferase activity"/>
    <property type="evidence" value="ECO:0007669"/>
    <property type="project" value="UniProtKB-UniRule"/>
</dbReference>
<dbReference type="GO" id="GO:0006730">
    <property type="term" value="P:one-carbon metabolic process"/>
    <property type="evidence" value="ECO:0007669"/>
    <property type="project" value="UniProtKB-KW"/>
</dbReference>
<dbReference type="GO" id="GO:0006556">
    <property type="term" value="P:S-adenosylmethionine biosynthetic process"/>
    <property type="evidence" value="ECO:0007669"/>
    <property type="project" value="UniProtKB-UniRule"/>
</dbReference>
<dbReference type="CDD" id="cd18079">
    <property type="entry name" value="S-AdoMet_synt"/>
    <property type="match status" value="1"/>
</dbReference>
<dbReference type="FunFam" id="3.30.300.10:FF:000001">
    <property type="entry name" value="S-adenosylmethionine synthase"/>
    <property type="match status" value="1"/>
</dbReference>
<dbReference type="FunFam" id="3.30.300.10:FF:000003">
    <property type="entry name" value="S-adenosylmethionine synthase"/>
    <property type="match status" value="1"/>
</dbReference>
<dbReference type="FunFam" id="3.30.300.10:FF:000004">
    <property type="entry name" value="S-adenosylmethionine synthase"/>
    <property type="match status" value="1"/>
</dbReference>
<dbReference type="Gene3D" id="3.30.300.10">
    <property type="match status" value="3"/>
</dbReference>
<dbReference type="HAMAP" id="MF_00086">
    <property type="entry name" value="S_AdoMet_synth1"/>
    <property type="match status" value="1"/>
</dbReference>
<dbReference type="InterPro" id="IPR022631">
    <property type="entry name" value="ADOMET_SYNTHASE_CS"/>
</dbReference>
<dbReference type="InterPro" id="IPR022630">
    <property type="entry name" value="S-AdoMet_synt_C"/>
</dbReference>
<dbReference type="InterPro" id="IPR022629">
    <property type="entry name" value="S-AdoMet_synt_central"/>
</dbReference>
<dbReference type="InterPro" id="IPR022628">
    <property type="entry name" value="S-AdoMet_synt_N"/>
</dbReference>
<dbReference type="InterPro" id="IPR002133">
    <property type="entry name" value="S-AdoMet_synthetase"/>
</dbReference>
<dbReference type="InterPro" id="IPR022636">
    <property type="entry name" value="S-AdoMet_synthetase_sfam"/>
</dbReference>
<dbReference type="NCBIfam" id="TIGR01034">
    <property type="entry name" value="metK"/>
    <property type="match status" value="1"/>
</dbReference>
<dbReference type="PANTHER" id="PTHR11964">
    <property type="entry name" value="S-ADENOSYLMETHIONINE SYNTHETASE"/>
    <property type="match status" value="1"/>
</dbReference>
<dbReference type="Pfam" id="PF02773">
    <property type="entry name" value="S-AdoMet_synt_C"/>
    <property type="match status" value="1"/>
</dbReference>
<dbReference type="Pfam" id="PF02772">
    <property type="entry name" value="S-AdoMet_synt_M"/>
    <property type="match status" value="1"/>
</dbReference>
<dbReference type="Pfam" id="PF00438">
    <property type="entry name" value="S-AdoMet_synt_N"/>
    <property type="match status" value="1"/>
</dbReference>
<dbReference type="PIRSF" id="PIRSF000497">
    <property type="entry name" value="MAT"/>
    <property type="match status" value="1"/>
</dbReference>
<dbReference type="SUPFAM" id="SSF55973">
    <property type="entry name" value="S-adenosylmethionine synthetase"/>
    <property type="match status" value="3"/>
</dbReference>
<dbReference type="PROSITE" id="PS00376">
    <property type="entry name" value="ADOMET_SYNTHASE_1"/>
    <property type="match status" value="1"/>
</dbReference>
<dbReference type="PROSITE" id="PS00377">
    <property type="entry name" value="ADOMET_SYNTHASE_2"/>
    <property type="match status" value="1"/>
</dbReference>
<keyword id="KW-0067">ATP-binding</keyword>
<keyword id="KW-0963">Cytoplasm</keyword>
<keyword id="KW-0460">Magnesium</keyword>
<keyword id="KW-0479">Metal-binding</keyword>
<keyword id="KW-0547">Nucleotide-binding</keyword>
<keyword id="KW-0554">One-carbon metabolism</keyword>
<keyword id="KW-0630">Potassium</keyword>
<keyword id="KW-1185">Reference proteome</keyword>
<keyword id="KW-0808">Transferase</keyword>
<feature type="chain" id="PRO_0000241017" description="S-adenosylmethionine synthase">
    <location>
        <begin position="1"/>
        <end position="383"/>
    </location>
</feature>
<feature type="region of interest" description="Flexible loop" evidence="1">
    <location>
        <begin position="99"/>
        <end position="109"/>
    </location>
</feature>
<feature type="binding site" description="in other chain" evidence="1">
    <location>
        <position position="15"/>
    </location>
    <ligand>
        <name>ATP</name>
        <dbReference type="ChEBI" id="CHEBI:30616"/>
        <note>ligand shared between two neighboring subunits</note>
    </ligand>
</feature>
<feature type="binding site" evidence="1">
    <location>
        <position position="17"/>
    </location>
    <ligand>
        <name>Mg(2+)</name>
        <dbReference type="ChEBI" id="CHEBI:18420"/>
    </ligand>
</feature>
<feature type="binding site" evidence="1">
    <location>
        <position position="43"/>
    </location>
    <ligand>
        <name>K(+)</name>
        <dbReference type="ChEBI" id="CHEBI:29103"/>
    </ligand>
</feature>
<feature type="binding site" description="in other chain" evidence="1">
    <location>
        <position position="56"/>
    </location>
    <ligand>
        <name>L-methionine</name>
        <dbReference type="ChEBI" id="CHEBI:57844"/>
        <note>ligand shared between two neighboring subunits</note>
    </ligand>
</feature>
<feature type="binding site" description="in other chain" evidence="1">
    <location>
        <position position="99"/>
    </location>
    <ligand>
        <name>L-methionine</name>
        <dbReference type="ChEBI" id="CHEBI:57844"/>
        <note>ligand shared between two neighboring subunits</note>
    </ligand>
</feature>
<feature type="binding site" description="in other chain" evidence="1">
    <location>
        <begin position="164"/>
        <end position="166"/>
    </location>
    <ligand>
        <name>ATP</name>
        <dbReference type="ChEBI" id="CHEBI:30616"/>
        <note>ligand shared between two neighboring subunits</note>
    </ligand>
</feature>
<feature type="binding site" description="in other chain" evidence="1">
    <location>
        <begin position="230"/>
        <end position="231"/>
    </location>
    <ligand>
        <name>ATP</name>
        <dbReference type="ChEBI" id="CHEBI:30616"/>
        <note>ligand shared between two neighboring subunits</note>
    </ligand>
</feature>
<feature type="binding site" evidence="1">
    <location>
        <position position="239"/>
    </location>
    <ligand>
        <name>ATP</name>
        <dbReference type="ChEBI" id="CHEBI:30616"/>
        <note>ligand shared between two neighboring subunits</note>
    </ligand>
</feature>
<feature type="binding site" evidence="1">
    <location>
        <position position="239"/>
    </location>
    <ligand>
        <name>L-methionine</name>
        <dbReference type="ChEBI" id="CHEBI:57844"/>
        <note>ligand shared between two neighboring subunits</note>
    </ligand>
</feature>
<feature type="binding site" description="in other chain" evidence="1">
    <location>
        <begin position="245"/>
        <end position="246"/>
    </location>
    <ligand>
        <name>ATP</name>
        <dbReference type="ChEBI" id="CHEBI:30616"/>
        <note>ligand shared between two neighboring subunits</note>
    </ligand>
</feature>
<feature type="binding site" evidence="1">
    <location>
        <position position="262"/>
    </location>
    <ligand>
        <name>ATP</name>
        <dbReference type="ChEBI" id="CHEBI:30616"/>
        <note>ligand shared between two neighboring subunits</note>
    </ligand>
</feature>
<feature type="binding site" evidence="1">
    <location>
        <position position="266"/>
    </location>
    <ligand>
        <name>ATP</name>
        <dbReference type="ChEBI" id="CHEBI:30616"/>
        <note>ligand shared between two neighboring subunits</note>
    </ligand>
</feature>
<feature type="binding site" description="in other chain" evidence="1">
    <location>
        <position position="270"/>
    </location>
    <ligand>
        <name>L-methionine</name>
        <dbReference type="ChEBI" id="CHEBI:57844"/>
        <note>ligand shared between two neighboring subunits</note>
    </ligand>
</feature>
<evidence type="ECO:0000255" key="1">
    <source>
        <dbReference type="HAMAP-Rule" id="MF_00086"/>
    </source>
</evidence>